<feature type="chain" id="PRO_0000358981" description="Acetyl-coenzyme A carboxylase carboxyl transferase subunit beta">
    <location>
        <begin position="1"/>
        <end position="306"/>
    </location>
</feature>
<feature type="domain" description="CoA carboxyltransferase N-terminal" evidence="2">
    <location>
        <begin position="25"/>
        <end position="294"/>
    </location>
</feature>
<feature type="zinc finger region" description="C4-type" evidence="1">
    <location>
        <begin position="29"/>
        <end position="51"/>
    </location>
</feature>
<feature type="region of interest" description="Disordered" evidence="3">
    <location>
        <begin position="286"/>
        <end position="306"/>
    </location>
</feature>
<feature type="binding site" evidence="1">
    <location>
        <position position="29"/>
    </location>
    <ligand>
        <name>Zn(2+)</name>
        <dbReference type="ChEBI" id="CHEBI:29105"/>
    </ligand>
</feature>
<feature type="binding site" evidence="1">
    <location>
        <position position="32"/>
    </location>
    <ligand>
        <name>Zn(2+)</name>
        <dbReference type="ChEBI" id="CHEBI:29105"/>
    </ligand>
</feature>
<feature type="binding site" evidence="1">
    <location>
        <position position="48"/>
    </location>
    <ligand>
        <name>Zn(2+)</name>
        <dbReference type="ChEBI" id="CHEBI:29105"/>
    </ligand>
</feature>
<feature type="binding site" evidence="1">
    <location>
        <position position="51"/>
    </location>
    <ligand>
        <name>Zn(2+)</name>
        <dbReference type="ChEBI" id="CHEBI:29105"/>
    </ligand>
</feature>
<gene>
    <name evidence="1" type="primary">accD</name>
    <name type="ordered locus">ESA_00900</name>
</gene>
<organism>
    <name type="scientific">Cronobacter sakazakii (strain ATCC BAA-894)</name>
    <name type="common">Enterobacter sakazakii</name>
    <dbReference type="NCBI Taxonomy" id="290339"/>
    <lineage>
        <taxon>Bacteria</taxon>
        <taxon>Pseudomonadati</taxon>
        <taxon>Pseudomonadota</taxon>
        <taxon>Gammaproteobacteria</taxon>
        <taxon>Enterobacterales</taxon>
        <taxon>Enterobacteriaceae</taxon>
        <taxon>Cronobacter</taxon>
    </lineage>
</organism>
<comment type="function">
    <text evidence="1">Component of the acetyl coenzyme A carboxylase (ACC) complex. Biotin carboxylase (BC) catalyzes the carboxylation of biotin on its carrier protein (BCCP) and then the CO(2) group is transferred by the transcarboxylase to acetyl-CoA to form malonyl-CoA.</text>
</comment>
<comment type="catalytic activity">
    <reaction evidence="1">
        <text>N(6)-carboxybiotinyl-L-lysyl-[protein] + acetyl-CoA = N(6)-biotinyl-L-lysyl-[protein] + malonyl-CoA</text>
        <dbReference type="Rhea" id="RHEA:54728"/>
        <dbReference type="Rhea" id="RHEA-COMP:10505"/>
        <dbReference type="Rhea" id="RHEA-COMP:10506"/>
        <dbReference type="ChEBI" id="CHEBI:57288"/>
        <dbReference type="ChEBI" id="CHEBI:57384"/>
        <dbReference type="ChEBI" id="CHEBI:83144"/>
        <dbReference type="ChEBI" id="CHEBI:83145"/>
        <dbReference type="EC" id="2.1.3.15"/>
    </reaction>
</comment>
<comment type="cofactor">
    <cofactor evidence="1">
        <name>Zn(2+)</name>
        <dbReference type="ChEBI" id="CHEBI:29105"/>
    </cofactor>
    <text evidence="1">Binds 1 zinc ion per subunit.</text>
</comment>
<comment type="pathway">
    <text evidence="1">Lipid metabolism; malonyl-CoA biosynthesis; malonyl-CoA from acetyl-CoA: step 1/1.</text>
</comment>
<comment type="subunit">
    <text evidence="1">Acetyl-CoA carboxylase is a heterohexamer composed of biotin carboxyl carrier protein (AccB), biotin carboxylase (AccC) and two subunits each of ACCase subunit alpha (AccA) and ACCase subunit beta (AccD).</text>
</comment>
<comment type="subcellular location">
    <subcellularLocation>
        <location evidence="1">Cytoplasm</location>
    </subcellularLocation>
</comment>
<comment type="similarity">
    <text evidence="1">Belongs to the AccD/PCCB family.</text>
</comment>
<comment type="sequence caution" evidence="4">
    <conflict type="erroneous initiation">
        <sequence resource="EMBL-CDS" id="ABU76170"/>
    </conflict>
    <text>Extended N-terminus.</text>
</comment>
<accession>A7MH52</accession>
<name>ACCD_CROS8</name>
<keyword id="KW-0067">ATP-binding</keyword>
<keyword id="KW-0963">Cytoplasm</keyword>
<keyword id="KW-0275">Fatty acid biosynthesis</keyword>
<keyword id="KW-0276">Fatty acid metabolism</keyword>
<keyword id="KW-0444">Lipid biosynthesis</keyword>
<keyword id="KW-0443">Lipid metabolism</keyword>
<keyword id="KW-0479">Metal-binding</keyword>
<keyword id="KW-0547">Nucleotide-binding</keyword>
<keyword id="KW-1185">Reference proteome</keyword>
<keyword id="KW-0808">Transferase</keyword>
<keyword id="KW-0862">Zinc</keyword>
<keyword id="KW-0863">Zinc-finger</keyword>
<proteinExistence type="inferred from homology"/>
<reference key="1">
    <citation type="journal article" date="2010" name="PLoS ONE">
        <title>Genome sequence of Cronobacter sakazakii BAA-894 and comparative genomic hybridization analysis with other Cronobacter species.</title>
        <authorList>
            <person name="Kucerova E."/>
            <person name="Clifton S.W."/>
            <person name="Xia X.Q."/>
            <person name="Long F."/>
            <person name="Porwollik S."/>
            <person name="Fulton L."/>
            <person name="Fronick C."/>
            <person name="Minx P."/>
            <person name="Kyung K."/>
            <person name="Warren W."/>
            <person name="Fulton R."/>
            <person name="Feng D."/>
            <person name="Wollam A."/>
            <person name="Shah N."/>
            <person name="Bhonagiri V."/>
            <person name="Nash W.E."/>
            <person name="Hallsworth-Pepin K."/>
            <person name="Wilson R.K."/>
            <person name="McClelland M."/>
            <person name="Forsythe S.J."/>
        </authorList>
    </citation>
    <scope>NUCLEOTIDE SEQUENCE [LARGE SCALE GENOMIC DNA]</scope>
    <source>
        <strain>ATCC BAA-894</strain>
    </source>
</reference>
<sequence>MSWIERILNKSNITPTRRANIPEGVWTKCDSCGQVLYRAELERNLEVCPKCDHHMRMAARDRLHSLLDEGSLVELGSELEPKDVLKFRDSKKYKDRLATAQKETGEKDALVVMKGTLHGMPVVAAAFEFAFMGGSMGSVVGARFVRAVEQALEDNCPLICFSASGGARMQEALMSLMQMAKTSAALAKMQERGLPYISVLTDPTMGGVSASFAMLGDLNIAEPKALIGFAGPRVIEQTVREKLPAGFQRSEFLIEKGAIDMIVRRPELRLKLASILAKLMNLPAPSPDAPREAVVVPPVPDQDHEA</sequence>
<dbReference type="EC" id="2.1.3.15" evidence="1"/>
<dbReference type="EMBL" id="CP000783">
    <property type="protein sequence ID" value="ABU76170.1"/>
    <property type="status" value="ALT_INIT"/>
    <property type="molecule type" value="Genomic_DNA"/>
</dbReference>
<dbReference type="RefSeq" id="WP_007892032.1">
    <property type="nucleotide sequence ID" value="NC_009778.1"/>
</dbReference>
<dbReference type="SMR" id="A7MH52"/>
<dbReference type="GeneID" id="56729835"/>
<dbReference type="KEGG" id="esa:ESA_00900"/>
<dbReference type="HOGENOM" id="CLU_015486_1_0_6"/>
<dbReference type="UniPathway" id="UPA00655">
    <property type="reaction ID" value="UER00711"/>
</dbReference>
<dbReference type="Proteomes" id="UP000000260">
    <property type="component" value="Chromosome"/>
</dbReference>
<dbReference type="GO" id="GO:0009329">
    <property type="term" value="C:acetate CoA-transferase complex"/>
    <property type="evidence" value="ECO:0007669"/>
    <property type="project" value="TreeGrafter"/>
</dbReference>
<dbReference type="GO" id="GO:0003989">
    <property type="term" value="F:acetyl-CoA carboxylase activity"/>
    <property type="evidence" value="ECO:0007669"/>
    <property type="project" value="InterPro"/>
</dbReference>
<dbReference type="GO" id="GO:0005524">
    <property type="term" value="F:ATP binding"/>
    <property type="evidence" value="ECO:0007669"/>
    <property type="project" value="UniProtKB-KW"/>
</dbReference>
<dbReference type="GO" id="GO:0016743">
    <property type="term" value="F:carboxyl- or carbamoyltransferase activity"/>
    <property type="evidence" value="ECO:0007669"/>
    <property type="project" value="UniProtKB-UniRule"/>
</dbReference>
<dbReference type="GO" id="GO:0008270">
    <property type="term" value="F:zinc ion binding"/>
    <property type="evidence" value="ECO:0007669"/>
    <property type="project" value="UniProtKB-UniRule"/>
</dbReference>
<dbReference type="GO" id="GO:0006633">
    <property type="term" value="P:fatty acid biosynthetic process"/>
    <property type="evidence" value="ECO:0007669"/>
    <property type="project" value="UniProtKB-KW"/>
</dbReference>
<dbReference type="GO" id="GO:2001295">
    <property type="term" value="P:malonyl-CoA biosynthetic process"/>
    <property type="evidence" value="ECO:0007669"/>
    <property type="project" value="UniProtKB-UniRule"/>
</dbReference>
<dbReference type="FunFam" id="3.90.226.10:FF:000013">
    <property type="entry name" value="Acetyl-coenzyme A carboxylase carboxyl transferase subunit beta"/>
    <property type="match status" value="1"/>
</dbReference>
<dbReference type="Gene3D" id="3.90.226.10">
    <property type="entry name" value="2-enoyl-CoA Hydratase, Chain A, domain 1"/>
    <property type="match status" value="1"/>
</dbReference>
<dbReference type="HAMAP" id="MF_01395">
    <property type="entry name" value="AcetylCoA_CT_beta"/>
    <property type="match status" value="1"/>
</dbReference>
<dbReference type="InterPro" id="IPR034733">
    <property type="entry name" value="AcCoA_carboxyl_beta"/>
</dbReference>
<dbReference type="InterPro" id="IPR000438">
    <property type="entry name" value="Acetyl_CoA_COase_Trfase_b_su"/>
</dbReference>
<dbReference type="InterPro" id="IPR029045">
    <property type="entry name" value="ClpP/crotonase-like_dom_sf"/>
</dbReference>
<dbReference type="InterPro" id="IPR011762">
    <property type="entry name" value="COA_CT_N"/>
</dbReference>
<dbReference type="InterPro" id="IPR041010">
    <property type="entry name" value="Znf-ACC"/>
</dbReference>
<dbReference type="NCBIfam" id="TIGR00515">
    <property type="entry name" value="accD"/>
    <property type="match status" value="1"/>
</dbReference>
<dbReference type="PANTHER" id="PTHR42995">
    <property type="entry name" value="ACETYL-COENZYME A CARBOXYLASE CARBOXYL TRANSFERASE SUBUNIT BETA, CHLOROPLASTIC"/>
    <property type="match status" value="1"/>
</dbReference>
<dbReference type="PANTHER" id="PTHR42995:SF5">
    <property type="entry name" value="ACETYL-COENZYME A CARBOXYLASE CARBOXYL TRANSFERASE SUBUNIT BETA, CHLOROPLASTIC"/>
    <property type="match status" value="1"/>
</dbReference>
<dbReference type="Pfam" id="PF01039">
    <property type="entry name" value="Carboxyl_trans"/>
    <property type="match status" value="1"/>
</dbReference>
<dbReference type="Pfam" id="PF17848">
    <property type="entry name" value="Zn_ribbon_ACC"/>
    <property type="match status" value="1"/>
</dbReference>
<dbReference type="PRINTS" id="PR01070">
    <property type="entry name" value="ACCCTRFRASEB"/>
</dbReference>
<dbReference type="SUPFAM" id="SSF52096">
    <property type="entry name" value="ClpP/crotonase"/>
    <property type="match status" value="1"/>
</dbReference>
<dbReference type="PROSITE" id="PS50980">
    <property type="entry name" value="COA_CT_NTER"/>
    <property type="match status" value="1"/>
</dbReference>
<evidence type="ECO:0000255" key="1">
    <source>
        <dbReference type="HAMAP-Rule" id="MF_01395"/>
    </source>
</evidence>
<evidence type="ECO:0000255" key="2">
    <source>
        <dbReference type="PROSITE-ProRule" id="PRU01136"/>
    </source>
</evidence>
<evidence type="ECO:0000256" key="3">
    <source>
        <dbReference type="SAM" id="MobiDB-lite"/>
    </source>
</evidence>
<evidence type="ECO:0000305" key="4"/>
<protein>
    <recommendedName>
        <fullName evidence="1">Acetyl-coenzyme A carboxylase carboxyl transferase subunit beta</fullName>
        <shortName evidence="1">ACCase subunit beta</shortName>
        <shortName evidence="1">Acetyl-CoA carboxylase carboxyltransferase subunit beta</shortName>
        <ecNumber evidence="1">2.1.3.15</ecNumber>
    </recommendedName>
</protein>